<dbReference type="EMBL" id="BC133511">
    <property type="protein sequence ID" value="AAI33512.1"/>
    <property type="molecule type" value="mRNA"/>
</dbReference>
<dbReference type="RefSeq" id="NP_001075206.1">
    <property type="nucleotide sequence ID" value="NM_001081737.2"/>
</dbReference>
<dbReference type="SMR" id="A2VE10"/>
<dbReference type="FunCoup" id="A2VE10">
    <property type="interactions" value="1832"/>
</dbReference>
<dbReference type="STRING" id="9913.ENSBTAP00000065372"/>
<dbReference type="PaxDb" id="9913-ENSBTAP00000048585"/>
<dbReference type="Ensembl" id="ENSBTAT00000057473.3">
    <property type="protein sequence ID" value="ENSBTAP00000048585.1"/>
    <property type="gene ID" value="ENSBTAG00000012545.7"/>
</dbReference>
<dbReference type="GeneID" id="540780"/>
<dbReference type="KEGG" id="bta:540780"/>
<dbReference type="CTD" id="113201"/>
<dbReference type="VEuPathDB" id="HostDB:ENSBTAG00000012545"/>
<dbReference type="VGNC" id="VGNC:84818">
    <property type="gene designation" value="GOLM2"/>
</dbReference>
<dbReference type="eggNOG" id="ENOG502QTYH">
    <property type="taxonomic scope" value="Eukaryota"/>
</dbReference>
<dbReference type="GeneTree" id="ENSGT00530000063675"/>
<dbReference type="HOGENOM" id="CLU_052047_1_0_1"/>
<dbReference type="InParanoid" id="A2VE10"/>
<dbReference type="OrthoDB" id="10072022at2759"/>
<dbReference type="TreeFam" id="TF331127"/>
<dbReference type="Proteomes" id="UP000009136">
    <property type="component" value="Chromosome 10"/>
</dbReference>
<dbReference type="Bgee" id="ENSBTAG00000012545">
    <property type="expression patterns" value="Expressed in occipital lobe and 108 other cell types or tissues"/>
</dbReference>
<dbReference type="GO" id="GO:0016020">
    <property type="term" value="C:membrane"/>
    <property type="evidence" value="ECO:0007669"/>
    <property type="project" value="UniProtKB-SubCell"/>
</dbReference>
<dbReference type="Gene3D" id="1.10.287.1490">
    <property type="match status" value="1"/>
</dbReference>
<dbReference type="InterPro" id="IPR026139">
    <property type="entry name" value="GOLM1/CASC4"/>
</dbReference>
<dbReference type="PANTHER" id="PTHR15896">
    <property type="entry name" value="GOLGI PHOSPHOPROTEIN 2/GP73-RELATED"/>
    <property type="match status" value="1"/>
</dbReference>
<dbReference type="PANTHER" id="PTHR15896:SF7">
    <property type="entry name" value="PROTEIN GOLM2"/>
    <property type="match status" value="1"/>
</dbReference>
<dbReference type="PRINTS" id="PR02084">
    <property type="entry name" value="GOLM1CASC4"/>
</dbReference>
<proteinExistence type="evidence at transcript level"/>
<reference key="1">
    <citation type="submission" date="2007-02" db="EMBL/GenBank/DDBJ databases">
        <authorList>
            <consortium name="NIH - Mammalian Gene Collection (MGC) project"/>
        </authorList>
    </citation>
    <scope>NUCLEOTIDE SEQUENCE [LARGE SCALE MRNA]</scope>
    <source>
        <strain>Hereford</strain>
        <tissue>Hypothalamus</tissue>
    </source>
</reference>
<gene>
    <name type="primary">GOLM2</name>
    <name evidence="1" type="synonym">CASC4</name>
</gene>
<evidence type="ECO:0000250" key="1">
    <source>
        <dbReference type="UniProtKB" id="Q6P4E1"/>
    </source>
</evidence>
<evidence type="ECO:0000255" key="2"/>
<evidence type="ECO:0000256" key="3">
    <source>
        <dbReference type="SAM" id="MobiDB-lite"/>
    </source>
</evidence>
<evidence type="ECO:0000305" key="4"/>
<sequence>MVGFGANRRAGRLPSLVLAVLLVVIAVLAFNYWSISSRHVLLQEEVAELQGQVQRTEVARGRLEKRNSDLLLLVDSHKKQIDQKEADYGRLSSRLQAREGLGKRCEDDKVKLQNNISYQMADIHHLKEQLAELRQEFLRQEDQLQDYRKNNTYLVKRLEYESFQCGQQIKELRAQHEENIKKLADQFLQEQKQEAHKFESKGGNELDTDNHAVPKNIPEVAENGAGKNEEPSSHHIPHGKEQIKRGGDAGMPGIEENDLAKAEDVPVALKKPPVSFSQYESHQVISHLPTGQPLSPNMVPDSHINHNGNSRTSKQNPSNPLQRLIPGPNLENEPRIQAEVLKQATKDRAGDFHKLKQNDEERELQMDPADYGKQRFNDAL</sequence>
<accession>A2VE10</accession>
<comment type="subcellular location">
    <subcellularLocation>
        <location evidence="4">Membrane</location>
        <topology evidence="4">Single-pass type II membrane protein</topology>
    </subcellularLocation>
</comment>
<comment type="similarity">
    <text evidence="4">Belongs to the GOLM family.</text>
</comment>
<name>GOLM2_BOVIN</name>
<keyword id="KW-0007">Acetylation</keyword>
<keyword id="KW-0175">Coiled coil</keyword>
<keyword id="KW-0472">Membrane</keyword>
<keyword id="KW-0597">Phosphoprotein</keyword>
<keyword id="KW-1185">Reference proteome</keyword>
<keyword id="KW-0735">Signal-anchor</keyword>
<keyword id="KW-0812">Transmembrane</keyword>
<keyword id="KW-1133">Transmembrane helix</keyword>
<protein>
    <recommendedName>
        <fullName evidence="4">Protein GOLM2</fullName>
    </recommendedName>
    <alternativeName>
        <fullName>Cancer susceptibility candidate gene 4 protein homolog</fullName>
        <shortName>CASC4</shortName>
    </alternativeName>
    <alternativeName>
        <fullName evidence="4">Golgi membrane protein 2</fullName>
    </alternativeName>
</protein>
<organism>
    <name type="scientific">Bos taurus</name>
    <name type="common">Bovine</name>
    <dbReference type="NCBI Taxonomy" id="9913"/>
    <lineage>
        <taxon>Eukaryota</taxon>
        <taxon>Metazoa</taxon>
        <taxon>Chordata</taxon>
        <taxon>Craniata</taxon>
        <taxon>Vertebrata</taxon>
        <taxon>Euteleostomi</taxon>
        <taxon>Mammalia</taxon>
        <taxon>Eutheria</taxon>
        <taxon>Laurasiatheria</taxon>
        <taxon>Artiodactyla</taxon>
        <taxon>Ruminantia</taxon>
        <taxon>Pecora</taxon>
        <taxon>Bovidae</taxon>
        <taxon>Bovinae</taxon>
        <taxon>Bos</taxon>
    </lineage>
</organism>
<feature type="chain" id="PRO_0000291842" description="Protein GOLM2">
    <location>
        <begin position="1"/>
        <end position="380"/>
    </location>
</feature>
<feature type="topological domain" description="Cytoplasmic" evidence="2">
    <location>
        <begin position="1"/>
        <end position="14"/>
    </location>
</feature>
<feature type="transmembrane region" description="Helical; Signal-anchor for type II membrane protein" evidence="2">
    <location>
        <begin position="15"/>
        <end position="35"/>
    </location>
</feature>
<feature type="topological domain" description="Lumenal" evidence="2">
    <location>
        <begin position="36"/>
        <end position="380"/>
    </location>
</feature>
<feature type="region of interest" description="Disordered" evidence="3">
    <location>
        <begin position="192"/>
        <end position="254"/>
    </location>
</feature>
<feature type="region of interest" description="Disordered" evidence="3">
    <location>
        <begin position="280"/>
        <end position="380"/>
    </location>
</feature>
<feature type="coiled-coil region" evidence="2">
    <location>
        <begin position="35"/>
        <end position="195"/>
    </location>
</feature>
<feature type="compositionally biased region" description="Basic and acidic residues" evidence="3">
    <location>
        <begin position="192"/>
        <end position="212"/>
    </location>
</feature>
<feature type="compositionally biased region" description="Basic and acidic residues" evidence="3">
    <location>
        <begin position="227"/>
        <end position="247"/>
    </location>
</feature>
<feature type="compositionally biased region" description="Polar residues" evidence="3">
    <location>
        <begin position="305"/>
        <end position="321"/>
    </location>
</feature>
<feature type="compositionally biased region" description="Basic and acidic residues" evidence="3">
    <location>
        <begin position="344"/>
        <end position="380"/>
    </location>
</feature>
<feature type="modified residue" description="N-acetylmethionine" evidence="1">
    <location>
        <position position="1"/>
    </location>
</feature>
<feature type="modified residue" description="Phosphoserine" evidence="1">
    <location>
        <position position="233"/>
    </location>
</feature>
<feature type="modified residue" description="Phosphoserine" evidence="1">
    <location>
        <position position="275"/>
    </location>
</feature>